<gene>
    <name evidence="1" type="primary">rnpA</name>
    <name type="ordered locus">BT9727_5168</name>
</gene>
<feature type="chain" id="PRO_0000198422" description="Ribonuclease P protein component">
    <location>
        <begin position="1"/>
        <end position="119"/>
    </location>
</feature>
<organism>
    <name type="scientific">Bacillus thuringiensis subsp. konkukian (strain 97-27)</name>
    <dbReference type="NCBI Taxonomy" id="281309"/>
    <lineage>
        <taxon>Bacteria</taxon>
        <taxon>Bacillati</taxon>
        <taxon>Bacillota</taxon>
        <taxon>Bacilli</taxon>
        <taxon>Bacillales</taxon>
        <taxon>Bacillaceae</taxon>
        <taxon>Bacillus</taxon>
        <taxon>Bacillus cereus group</taxon>
    </lineage>
</organism>
<dbReference type="EC" id="3.1.26.5" evidence="1"/>
<dbReference type="EMBL" id="AE017355">
    <property type="protein sequence ID" value="AAT63331.1"/>
    <property type="molecule type" value="Genomic_DNA"/>
</dbReference>
<dbReference type="RefSeq" id="WP_000726628.1">
    <property type="nucleotide sequence ID" value="NC_005957.1"/>
</dbReference>
<dbReference type="RefSeq" id="YP_039477.1">
    <property type="nucleotide sequence ID" value="NC_005957.1"/>
</dbReference>
<dbReference type="SMR" id="Q6HAE9"/>
<dbReference type="GeneID" id="45025315"/>
<dbReference type="KEGG" id="btk:BT9727_5168"/>
<dbReference type="PATRIC" id="fig|281309.8.peg.5493"/>
<dbReference type="HOGENOM" id="CLU_117179_9_1_9"/>
<dbReference type="Proteomes" id="UP000001301">
    <property type="component" value="Chromosome"/>
</dbReference>
<dbReference type="GO" id="GO:0030677">
    <property type="term" value="C:ribonuclease P complex"/>
    <property type="evidence" value="ECO:0007669"/>
    <property type="project" value="TreeGrafter"/>
</dbReference>
<dbReference type="GO" id="GO:0042781">
    <property type="term" value="F:3'-tRNA processing endoribonuclease activity"/>
    <property type="evidence" value="ECO:0007669"/>
    <property type="project" value="TreeGrafter"/>
</dbReference>
<dbReference type="GO" id="GO:0004526">
    <property type="term" value="F:ribonuclease P activity"/>
    <property type="evidence" value="ECO:0007669"/>
    <property type="project" value="UniProtKB-UniRule"/>
</dbReference>
<dbReference type="GO" id="GO:0000049">
    <property type="term" value="F:tRNA binding"/>
    <property type="evidence" value="ECO:0007669"/>
    <property type="project" value="UniProtKB-UniRule"/>
</dbReference>
<dbReference type="GO" id="GO:0001682">
    <property type="term" value="P:tRNA 5'-leader removal"/>
    <property type="evidence" value="ECO:0007669"/>
    <property type="project" value="UniProtKB-UniRule"/>
</dbReference>
<dbReference type="FunFam" id="3.30.230.10:FF:000021">
    <property type="entry name" value="Ribonuclease P protein component"/>
    <property type="match status" value="1"/>
</dbReference>
<dbReference type="Gene3D" id="3.30.230.10">
    <property type="match status" value="1"/>
</dbReference>
<dbReference type="HAMAP" id="MF_00227">
    <property type="entry name" value="RNase_P"/>
    <property type="match status" value="1"/>
</dbReference>
<dbReference type="InterPro" id="IPR020568">
    <property type="entry name" value="Ribosomal_Su5_D2-typ_SF"/>
</dbReference>
<dbReference type="InterPro" id="IPR014721">
    <property type="entry name" value="Ribsml_uS5_D2-typ_fold_subgr"/>
</dbReference>
<dbReference type="InterPro" id="IPR000100">
    <property type="entry name" value="RNase_P"/>
</dbReference>
<dbReference type="InterPro" id="IPR020539">
    <property type="entry name" value="RNase_P_CS"/>
</dbReference>
<dbReference type="NCBIfam" id="TIGR00188">
    <property type="entry name" value="rnpA"/>
    <property type="match status" value="1"/>
</dbReference>
<dbReference type="PANTHER" id="PTHR33992">
    <property type="entry name" value="RIBONUCLEASE P PROTEIN COMPONENT"/>
    <property type="match status" value="1"/>
</dbReference>
<dbReference type="PANTHER" id="PTHR33992:SF1">
    <property type="entry name" value="RIBONUCLEASE P PROTEIN COMPONENT"/>
    <property type="match status" value="1"/>
</dbReference>
<dbReference type="Pfam" id="PF00825">
    <property type="entry name" value="Ribonuclease_P"/>
    <property type="match status" value="1"/>
</dbReference>
<dbReference type="SUPFAM" id="SSF54211">
    <property type="entry name" value="Ribosomal protein S5 domain 2-like"/>
    <property type="match status" value="1"/>
</dbReference>
<dbReference type="PROSITE" id="PS00648">
    <property type="entry name" value="RIBONUCLEASE_P"/>
    <property type="match status" value="1"/>
</dbReference>
<keyword id="KW-0255">Endonuclease</keyword>
<keyword id="KW-0378">Hydrolase</keyword>
<keyword id="KW-0540">Nuclease</keyword>
<keyword id="KW-0694">RNA-binding</keyword>
<keyword id="KW-0819">tRNA processing</keyword>
<reference key="1">
    <citation type="journal article" date="2006" name="J. Bacteriol.">
        <title>Pathogenomic sequence analysis of Bacillus cereus and Bacillus thuringiensis isolates closely related to Bacillus anthracis.</title>
        <authorList>
            <person name="Han C.S."/>
            <person name="Xie G."/>
            <person name="Challacombe J.F."/>
            <person name="Altherr M.R."/>
            <person name="Bhotika S.S."/>
            <person name="Bruce D."/>
            <person name="Campbell C.S."/>
            <person name="Campbell M.L."/>
            <person name="Chen J."/>
            <person name="Chertkov O."/>
            <person name="Cleland C."/>
            <person name="Dimitrijevic M."/>
            <person name="Doggett N.A."/>
            <person name="Fawcett J.J."/>
            <person name="Glavina T."/>
            <person name="Goodwin L.A."/>
            <person name="Hill K.K."/>
            <person name="Hitchcock P."/>
            <person name="Jackson P.J."/>
            <person name="Keim P."/>
            <person name="Kewalramani A.R."/>
            <person name="Longmire J."/>
            <person name="Lucas S."/>
            <person name="Malfatti S."/>
            <person name="McMurry K."/>
            <person name="Meincke L.J."/>
            <person name="Misra M."/>
            <person name="Moseman B.L."/>
            <person name="Mundt M."/>
            <person name="Munk A.C."/>
            <person name="Okinaka R.T."/>
            <person name="Parson-Quintana B."/>
            <person name="Reilly L.P."/>
            <person name="Richardson P."/>
            <person name="Robinson D.L."/>
            <person name="Rubin E."/>
            <person name="Saunders E."/>
            <person name="Tapia R."/>
            <person name="Tesmer J.G."/>
            <person name="Thayer N."/>
            <person name="Thompson L.S."/>
            <person name="Tice H."/>
            <person name="Ticknor L.O."/>
            <person name="Wills P.L."/>
            <person name="Brettin T.S."/>
            <person name="Gilna P."/>
        </authorList>
    </citation>
    <scope>NUCLEOTIDE SEQUENCE [LARGE SCALE GENOMIC DNA]</scope>
    <source>
        <strain>97-27</strain>
    </source>
</reference>
<accession>Q6HAE9</accession>
<sequence length="119" mass="14027">MKKKHRIKKNDEFQTVFQKGKSNANRQFVVYQLDKEEQPNFRIGLSVSKKIGNAVVRNRIKRMIRQSITELKDEIDSGKDFVIIARKPCAEMTYEELKKSLIHVFKRSGMKRIKSSVRK</sequence>
<name>RNPA_BACHK</name>
<evidence type="ECO:0000255" key="1">
    <source>
        <dbReference type="HAMAP-Rule" id="MF_00227"/>
    </source>
</evidence>
<comment type="function">
    <text evidence="1">RNaseP catalyzes the removal of the 5'-leader sequence from pre-tRNA to produce the mature 5'-terminus. It can also cleave other RNA substrates such as 4.5S RNA. The protein component plays an auxiliary but essential role in vivo by binding to the 5'-leader sequence and broadening the substrate specificity of the ribozyme.</text>
</comment>
<comment type="catalytic activity">
    <reaction evidence="1">
        <text>Endonucleolytic cleavage of RNA, removing 5'-extranucleotides from tRNA precursor.</text>
        <dbReference type="EC" id="3.1.26.5"/>
    </reaction>
</comment>
<comment type="subunit">
    <text evidence="1">Consists of a catalytic RNA component (M1 or rnpB) and a protein subunit.</text>
</comment>
<comment type="similarity">
    <text evidence="1">Belongs to the RnpA family.</text>
</comment>
<proteinExistence type="inferred from homology"/>
<protein>
    <recommendedName>
        <fullName evidence="1">Ribonuclease P protein component</fullName>
        <shortName evidence="1">RNase P protein</shortName>
        <shortName evidence="1">RNaseP protein</shortName>
        <ecNumber evidence="1">3.1.26.5</ecNumber>
    </recommendedName>
    <alternativeName>
        <fullName evidence="1">Protein C5</fullName>
    </alternativeName>
</protein>